<keyword id="KW-0030">Aminoacyl-tRNA synthetase</keyword>
<keyword id="KW-0067">ATP-binding</keyword>
<keyword id="KW-0963">Cytoplasm</keyword>
<keyword id="KW-0436">Ligase</keyword>
<keyword id="KW-0479">Metal-binding</keyword>
<keyword id="KW-0547">Nucleotide-binding</keyword>
<keyword id="KW-0648">Protein biosynthesis</keyword>
<keyword id="KW-1185">Reference proteome</keyword>
<keyword id="KW-0862">Zinc</keyword>
<feature type="chain" id="PRO_1000216239" description="Isoleucine--tRNA ligase">
    <location>
        <begin position="1"/>
        <end position="957"/>
    </location>
</feature>
<feature type="short sequence motif" description="'HIGH' region">
    <location>
        <begin position="57"/>
        <end position="67"/>
    </location>
</feature>
<feature type="short sequence motif" description="'KMSKS' region">
    <location>
        <begin position="635"/>
        <end position="639"/>
    </location>
</feature>
<feature type="binding site" evidence="1">
    <location>
        <position position="594"/>
    </location>
    <ligand>
        <name>L-isoleucyl-5'-AMP</name>
        <dbReference type="ChEBI" id="CHEBI:178002"/>
    </ligand>
</feature>
<feature type="binding site" evidence="1">
    <location>
        <position position="638"/>
    </location>
    <ligand>
        <name>ATP</name>
        <dbReference type="ChEBI" id="CHEBI:30616"/>
    </ligand>
</feature>
<feature type="binding site" evidence="1">
    <location>
        <position position="920"/>
    </location>
    <ligand>
        <name>Zn(2+)</name>
        <dbReference type="ChEBI" id="CHEBI:29105"/>
    </ligand>
</feature>
<feature type="binding site" evidence="1">
    <location>
        <position position="923"/>
    </location>
    <ligand>
        <name>Zn(2+)</name>
        <dbReference type="ChEBI" id="CHEBI:29105"/>
    </ligand>
</feature>
<feature type="binding site" evidence="1">
    <location>
        <position position="940"/>
    </location>
    <ligand>
        <name>Zn(2+)</name>
        <dbReference type="ChEBI" id="CHEBI:29105"/>
    </ligand>
</feature>
<feature type="binding site" evidence="1">
    <location>
        <position position="943"/>
    </location>
    <ligand>
        <name>Zn(2+)</name>
        <dbReference type="ChEBI" id="CHEBI:29105"/>
    </ligand>
</feature>
<dbReference type="EC" id="6.1.1.5" evidence="1"/>
<dbReference type="EMBL" id="CP001154">
    <property type="protein sequence ID" value="ACO73607.1"/>
    <property type="molecule type" value="Genomic_DNA"/>
</dbReference>
<dbReference type="RefSeq" id="WP_012696099.1">
    <property type="nucleotide sequence ID" value="NC_012559.1"/>
</dbReference>
<dbReference type="SMR" id="C1DCX2"/>
<dbReference type="STRING" id="557598.LHK_00614"/>
<dbReference type="KEGG" id="lhk:LHK_00614"/>
<dbReference type="eggNOG" id="COG0060">
    <property type="taxonomic scope" value="Bacteria"/>
</dbReference>
<dbReference type="HOGENOM" id="CLU_001493_7_1_4"/>
<dbReference type="Proteomes" id="UP000002010">
    <property type="component" value="Chromosome"/>
</dbReference>
<dbReference type="GO" id="GO:0005829">
    <property type="term" value="C:cytosol"/>
    <property type="evidence" value="ECO:0007669"/>
    <property type="project" value="TreeGrafter"/>
</dbReference>
<dbReference type="GO" id="GO:0002161">
    <property type="term" value="F:aminoacyl-tRNA deacylase activity"/>
    <property type="evidence" value="ECO:0007669"/>
    <property type="project" value="InterPro"/>
</dbReference>
<dbReference type="GO" id="GO:0005524">
    <property type="term" value="F:ATP binding"/>
    <property type="evidence" value="ECO:0007669"/>
    <property type="project" value="UniProtKB-UniRule"/>
</dbReference>
<dbReference type="GO" id="GO:0004822">
    <property type="term" value="F:isoleucine-tRNA ligase activity"/>
    <property type="evidence" value="ECO:0007669"/>
    <property type="project" value="UniProtKB-UniRule"/>
</dbReference>
<dbReference type="GO" id="GO:0000049">
    <property type="term" value="F:tRNA binding"/>
    <property type="evidence" value="ECO:0007669"/>
    <property type="project" value="InterPro"/>
</dbReference>
<dbReference type="GO" id="GO:0008270">
    <property type="term" value="F:zinc ion binding"/>
    <property type="evidence" value="ECO:0007669"/>
    <property type="project" value="UniProtKB-UniRule"/>
</dbReference>
<dbReference type="GO" id="GO:0006428">
    <property type="term" value="P:isoleucyl-tRNA aminoacylation"/>
    <property type="evidence" value="ECO:0007669"/>
    <property type="project" value="UniProtKB-UniRule"/>
</dbReference>
<dbReference type="CDD" id="cd07960">
    <property type="entry name" value="Anticodon_Ia_Ile_BEm"/>
    <property type="match status" value="1"/>
</dbReference>
<dbReference type="FunFam" id="3.40.50.620:FF:000048">
    <property type="entry name" value="Isoleucine--tRNA ligase"/>
    <property type="match status" value="1"/>
</dbReference>
<dbReference type="Gene3D" id="1.10.730.20">
    <property type="match status" value="1"/>
</dbReference>
<dbReference type="Gene3D" id="3.40.50.620">
    <property type="entry name" value="HUPs"/>
    <property type="match status" value="2"/>
</dbReference>
<dbReference type="Gene3D" id="1.10.10.830">
    <property type="entry name" value="Ile-tRNA synthetase CP2 domain-like"/>
    <property type="match status" value="1"/>
</dbReference>
<dbReference type="Gene3D" id="3.90.740.10">
    <property type="entry name" value="Valyl/Leucyl/Isoleucyl-tRNA synthetase, editing domain"/>
    <property type="match status" value="1"/>
</dbReference>
<dbReference type="HAMAP" id="MF_02002">
    <property type="entry name" value="Ile_tRNA_synth_type1"/>
    <property type="match status" value="1"/>
</dbReference>
<dbReference type="InterPro" id="IPR001412">
    <property type="entry name" value="aa-tRNA-synth_I_CS"/>
</dbReference>
<dbReference type="InterPro" id="IPR002300">
    <property type="entry name" value="aa-tRNA-synth_Ia"/>
</dbReference>
<dbReference type="InterPro" id="IPR033708">
    <property type="entry name" value="Anticodon_Ile_BEm"/>
</dbReference>
<dbReference type="InterPro" id="IPR002301">
    <property type="entry name" value="Ile-tRNA-ligase"/>
</dbReference>
<dbReference type="InterPro" id="IPR023585">
    <property type="entry name" value="Ile-tRNA-ligase_type1"/>
</dbReference>
<dbReference type="InterPro" id="IPR050081">
    <property type="entry name" value="Ile-tRNA_ligase"/>
</dbReference>
<dbReference type="InterPro" id="IPR013155">
    <property type="entry name" value="M/V/L/I-tRNA-synth_anticd-bd"/>
</dbReference>
<dbReference type="InterPro" id="IPR014729">
    <property type="entry name" value="Rossmann-like_a/b/a_fold"/>
</dbReference>
<dbReference type="InterPro" id="IPR009080">
    <property type="entry name" value="tRNAsynth_Ia_anticodon-bd"/>
</dbReference>
<dbReference type="InterPro" id="IPR009008">
    <property type="entry name" value="Val/Leu/Ile-tRNA-synth_edit"/>
</dbReference>
<dbReference type="InterPro" id="IPR010663">
    <property type="entry name" value="Znf_FPG/IleRS"/>
</dbReference>
<dbReference type="NCBIfam" id="TIGR00392">
    <property type="entry name" value="ileS"/>
    <property type="match status" value="1"/>
</dbReference>
<dbReference type="PANTHER" id="PTHR42765:SF1">
    <property type="entry name" value="ISOLEUCINE--TRNA LIGASE, MITOCHONDRIAL"/>
    <property type="match status" value="1"/>
</dbReference>
<dbReference type="PANTHER" id="PTHR42765">
    <property type="entry name" value="SOLEUCYL-TRNA SYNTHETASE"/>
    <property type="match status" value="1"/>
</dbReference>
<dbReference type="Pfam" id="PF08264">
    <property type="entry name" value="Anticodon_1"/>
    <property type="match status" value="1"/>
</dbReference>
<dbReference type="Pfam" id="PF00133">
    <property type="entry name" value="tRNA-synt_1"/>
    <property type="match status" value="2"/>
</dbReference>
<dbReference type="Pfam" id="PF06827">
    <property type="entry name" value="zf-FPG_IleRS"/>
    <property type="match status" value="1"/>
</dbReference>
<dbReference type="PRINTS" id="PR00984">
    <property type="entry name" value="TRNASYNTHILE"/>
</dbReference>
<dbReference type="SUPFAM" id="SSF47323">
    <property type="entry name" value="Anticodon-binding domain of a subclass of class I aminoacyl-tRNA synthetases"/>
    <property type="match status" value="1"/>
</dbReference>
<dbReference type="SUPFAM" id="SSF52374">
    <property type="entry name" value="Nucleotidylyl transferase"/>
    <property type="match status" value="1"/>
</dbReference>
<dbReference type="SUPFAM" id="SSF50677">
    <property type="entry name" value="ValRS/IleRS/LeuRS editing domain"/>
    <property type="match status" value="1"/>
</dbReference>
<dbReference type="PROSITE" id="PS00178">
    <property type="entry name" value="AA_TRNA_LIGASE_I"/>
    <property type="match status" value="1"/>
</dbReference>
<protein>
    <recommendedName>
        <fullName evidence="1">Isoleucine--tRNA ligase</fullName>
        <ecNumber evidence="1">6.1.1.5</ecNumber>
    </recommendedName>
    <alternativeName>
        <fullName evidence="1">Isoleucyl-tRNA synthetase</fullName>
        <shortName evidence="1">IleRS</shortName>
    </alternativeName>
</protein>
<reference key="1">
    <citation type="journal article" date="2009" name="PLoS Genet.">
        <title>The complete genome and proteome of Laribacter hongkongensis reveal potential mechanisms for adaptations to different temperatures and habitats.</title>
        <authorList>
            <person name="Woo P.C.Y."/>
            <person name="Lau S.K.P."/>
            <person name="Tse H."/>
            <person name="Teng J.L.L."/>
            <person name="Curreem S.O."/>
            <person name="Tsang A.K.L."/>
            <person name="Fan R.Y.Y."/>
            <person name="Wong G.K.M."/>
            <person name="Huang Y."/>
            <person name="Loman N.J."/>
            <person name="Snyder L.A.S."/>
            <person name="Cai J.J."/>
            <person name="Huang J.-D."/>
            <person name="Mak W."/>
            <person name="Pallen M.J."/>
            <person name="Lok S."/>
            <person name="Yuen K.-Y."/>
        </authorList>
    </citation>
    <scope>NUCLEOTIDE SEQUENCE [LARGE SCALE GENOMIC DNA]</scope>
    <source>
        <strain>HLHK9</strain>
    </source>
</reference>
<name>SYI_LARHH</name>
<sequence length="957" mass="106364">MDLKKTVNLLDTPFPMRGDLARREPGWLAQWQAQQRYQKLRKIAAGRPKFILHDGPPYANGDIHIGHAVNKILKDIIVRSKTQAGFDAPYVPGWDCHGLPIEHQIEKLVKGDKKAIEAAPSIHARITEYRKANGLDAKATDLPASFIRELCREYAGLQVERQKKDFIRLGVLGEWDNPYRTMSFRSEADEIRALGKLYQQGYLFKGLKPVYWCFDCGSALAEAEVEYQDKTSPTIDVAFASAEPEKLAAAFGLSALPAGKTASAVIWTTTPWTIPANQALNVHPDFDYGLYDTEKGLLILAADLAKGALERFGLTGVEVARCKGQALDRLTFRHPFYDRVSPVYVGDYVTLDAGTGIVHSAPAYGLEDFDSCRKNGMPNDAILNPVTSDGTYVDSLPFFGGLHIWKANPLIVEKLAEVGALMHTSPLSHSYPHCWRHKTPVVYRATTQWFVGMDREVAGSTLRQRALKGVDDTAFFPAWGQARLHAMIANRPDWCVSRQRNWGVPIPFFLDKQTGEPHPRTPELLEAVARKVEEQGINAWFELDPAELLGEDAARFDKMKDTLDVWFDSGTTHFHVLRGTHAEQLAYPADLYLEGSDQHRGWFHSSLLTGCALDGRAPYNQLLTHGFVVDGQGRKMSKSVGNVIAPQKINDSLGADILRLWVASTDYSGELAISDTILKGTTDSYRRLRNTIRFLLANLSDFNPATDALPVSELTELDRYALVLAQRLHAGVAEDCYPRYAFHTAMQAIVGYCTDDLGAFWLDIIKDRLYTTKADSKARRSAQTALWHVTRSLLSLLAPVLCFTADEAWQALTGEAEDSPVYHTWHELPVVADAEALAARWDVLRALRAQINKDIETLREAGAVGSSLQAEVDIEADAGLYPLLNALGDELKFVLIVSRVGVVPGPETRIRVSASGEQKCERCWHYHPTVGENAEAPTLCARCYDNIFGQGESRSYA</sequence>
<accession>C1DCX2</accession>
<proteinExistence type="inferred from homology"/>
<organism>
    <name type="scientific">Laribacter hongkongensis (strain HLHK9)</name>
    <dbReference type="NCBI Taxonomy" id="557598"/>
    <lineage>
        <taxon>Bacteria</taxon>
        <taxon>Pseudomonadati</taxon>
        <taxon>Pseudomonadota</taxon>
        <taxon>Betaproteobacteria</taxon>
        <taxon>Neisseriales</taxon>
        <taxon>Aquaspirillaceae</taxon>
        <taxon>Laribacter</taxon>
    </lineage>
</organism>
<comment type="function">
    <text evidence="1">Catalyzes the attachment of isoleucine to tRNA(Ile). As IleRS can inadvertently accommodate and process structurally similar amino acids such as valine, to avoid such errors it has two additional distinct tRNA(Ile)-dependent editing activities. One activity is designated as 'pretransfer' editing and involves the hydrolysis of activated Val-AMP. The other activity is designated 'posttransfer' editing and involves deacylation of mischarged Val-tRNA(Ile).</text>
</comment>
<comment type="catalytic activity">
    <reaction evidence="1">
        <text>tRNA(Ile) + L-isoleucine + ATP = L-isoleucyl-tRNA(Ile) + AMP + diphosphate</text>
        <dbReference type="Rhea" id="RHEA:11060"/>
        <dbReference type="Rhea" id="RHEA-COMP:9666"/>
        <dbReference type="Rhea" id="RHEA-COMP:9695"/>
        <dbReference type="ChEBI" id="CHEBI:30616"/>
        <dbReference type="ChEBI" id="CHEBI:33019"/>
        <dbReference type="ChEBI" id="CHEBI:58045"/>
        <dbReference type="ChEBI" id="CHEBI:78442"/>
        <dbReference type="ChEBI" id="CHEBI:78528"/>
        <dbReference type="ChEBI" id="CHEBI:456215"/>
        <dbReference type="EC" id="6.1.1.5"/>
    </reaction>
</comment>
<comment type="cofactor">
    <cofactor evidence="1">
        <name>Zn(2+)</name>
        <dbReference type="ChEBI" id="CHEBI:29105"/>
    </cofactor>
    <text evidence="1">Binds 1 zinc ion per subunit.</text>
</comment>
<comment type="subunit">
    <text evidence="1">Monomer.</text>
</comment>
<comment type="subcellular location">
    <subcellularLocation>
        <location evidence="1">Cytoplasm</location>
    </subcellularLocation>
</comment>
<comment type="domain">
    <text evidence="1">IleRS has two distinct active sites: one for aminoacylation and one for editing. The misactivated valine is translocated from the active site to the editing site, which sterically excludes the correctly activated isoleucine. The single editing site contains two valyl binding pockets, one specific for each substrate (Val-AMP or Val-tRNA(Ile)).</text>
</comment>
<comment type="similarity">
    <text evidence="1">Belongs to the class-I aminoacyl-tRNA synthetase family. IleS type 1 subfamily.</text>
</comment>
<evidence type="ECO:0000255" key="1">
    <source>
        <dbReference type="HAMAP-Rule" id="MF_02002"/>
    </source>
</evidence>
<gene>
    <name evidence="1" type="primary">ileS</name>
    <name type="ordered locus">LHK_00614</name>
</gene>